<feature type="chain" id="PRO_1000055195" description="Large ribosomal subunit protein uL6">
    <location>
        <begin position="1"/>
        <end position="179"/>
    </location>
</feature>
<organism>
    <name type="scientific">Bacillus velezensis (strain DSM 23117 / BGSC 10A6 / LMG 26770 / FZB42)</name>
    <name type="common">Bacillus amyloliquefaciens subsp. plantarum</name>
    <dbReference type="NCBI Taxonomy" id="326423"/>
    <lineage>
        <taxon>Bacteria</taxon>
        <taxon>Bacillati</taxon>
        <taxon>Bacillota</taxon>
        <taxon>Bacilli</taxon>
        <taxon>Bacillales</taxon>
        <taxon>Bacillaceae</taxon>
        <taxon>Bacillus</taxon>
        <taxon>Bacillus amyloliquefaciens group</taxon>
    </lineage>
</organism>
<sequence>MSRVGKKLLEIPSGVTVTLNEGNTVAVKGPKGELTRTFHPDMEIKIEDNVLTVTRPSDHKEHRALHGTTRSLLGNMVEGVSKGFERGLELVGVGYRAAKSGNKLVLNVGYSHPVEIVPEEGIEIEVPSQTKVVVKGTDKERVGAIAANIRAVRSPEPYKGKGIRYEGEVVRRKEGKSAK</sequence>
<keyword id="KW-0687">Ribonucleoprotein</keyword>
<keyword id="KW-0689">Ribosomal protein</keyword>
<keyword id="KW-0694">RNA-binding</keyword>
<keyword id="KW-0699">rRNA-binding</keyword>
<evidence type="ECO:0000255" key="1">
    <source>
        <dbReference type="HAMAP-Rule" id="MF_01365"/>
    </source>
</evidence>
<evidence type="ECO:0000305" key="2"/>
<gene>
    <name evidence="1" type="primary">rplF</name>
    <name type="ordered locus">RBAM_001560</name>
</gene>
<protein>
    <recommendedName>
        <fullName evidence="1">Large ribosomal subunit protein uL6</fullName>
    </recommendedName>
    <alternativeName>
        <fullName evidence="2">50S ribosomal protein L6</fullName>
    </alternativeName>
</protein>
<comment type="function">
    <text evidence="1">This protein binds to the 23S rRNA, and is important in its secondary structure. It is located near the subunit interface in the base of the L7/L12 stalk, and near the tRNA binding site of the peptidyltransferase center.</text>
</comment>
<comment type="subunit">
    <text evidence="1">Part of the 50S ribosomal subunit.</text>
</comment>
<comment type="similarity">
    <text evidence="1">Belongs to the universal ribosomal protein uL6 family.</text>
</comment>
<dbReference type="EMBL" id="CP000560">
    <property type="protein sequence ID" value="ABS72579.1"/>
    <property type="molecule type" value="Genomic_DNA"/>
</dbReference>
<dbReference type="RefSeq" id="WP_003156490.1">
    <property type="nucleotide sequence ID" value="NC_009725.2"/>
</dbReference>
<dbReference type="SMR" id="A7Z0Q3"/>
<dbReference type="GeneID" id="93079295"/>
<dbReference type="KEGG" id="bay:RBAM_001560"/>
<dbReference type="HOGENOM" id="CLU_065464_1_2_9"/>
<dbReference type="Proteomes" id="UP000001120">
    <property type="component" value="Chromosome"/>
</dbReference>
<dbReference type="GO" id="GO:0022625">
    <property type="term" value="C:cytosolic large ribosomal subunit"/>
    <property type="evidence" value="ECO:0007669"/>
    <property type="project" value="TreeGrafter"/>
</dbReference>
<dbReference type="GO" id="GO:0019843">
    <property type="term" value="F:rRNA binding"/>
    <property type="evidence" value="ECO:0007669"/>
    <property type="project" value="UniProtKB-UniRule"/>
</dbReference>
<dbReference type="GO" id="GO:0003735">
    <property type="term" value="F:structural constituent of ribosome"/>
    <property type="evidence" value="ECO:0007669"/>
    <property type="project" value="InterPro"/>
</dbReference>
<dbReference type="GO" id="GO:0002181">
    <property type="term" value="P:cytoplasmic translation"/>
    <property type="evidence" value="ECO:0007669"/>
    <property type="project" value="TreeGrafter"/>
</dbReference>
<dbReference type="FunFam" id="3.90.930.12:FF:000001">
    <property type="entry name" value="50S ribosomal protein L6"/>
    <property type="match status" value="1"/>
</dbReference>
<dbReference type="FunFam" id="3.90.930.12:FF:000002">
    <property type="entry name" value="50S ribosomal protein L6"/>
    <property type="match status" value="1"/>
</dbReference>
<dbReference type="Gene3D" id="3.90.930.12">
    <property type="entry name" value="Ribosomal protein L6, alpha-beta domain"/>
    <property type="match status" value="2"/>
</dbReference>
<dbReference type="HAMAP" id="MF_01365_B">
    <property type="entry name" value="Ribosomal_uL6_B"/>
    <property type="match status" value="1"/>
</dbReference>
<dbReference type="InterPro" id="IPR000702">
    <property type="entry name" value="Ribosomal_uL6-like"/>
</dbReference>
<dbReference type="InterPro" id="IPR036789">
    <property type="entry name" value="Ribosomal_uL6-like_a/b-dom_sf"/>
</dbReference>
<dbReference type="InterPro" id="IPR020040">
    <property type="entry name" value="Ribosomal_uL6_a/b-dom"/>
</dbReference>
<dbReference type="InterPro" id="IPR019906">
    <property type="entry name" value="Ribosomal_uL6_bac-type"/>
</dbReference>
<dbReference type="InterPro" id="IPR002358">
    <property type="entry name" value="Ribosomal_uL6_CS"/>
</dbReference>
<dbReference type="NCBIfam" id="TIGR03654">
    <property type="entry name" value="L6_bact"/>
    <property type="match status" value="1"/>
</dbReference>
<dbReference type="PANTHER" id="PTHR11655">
    <property type="entry name" value="60S/50S RIBOSOMAL PROTEIN L6/L9"/>
    <property type="match status" value="1"/>
</dbReference>
<dbReference type="PANTHER" id="PTHR11655:SF14">
    <property type="entry name" value="LARGE RIBOSOMAL SUBUNIT PROTEIN UL6M"/>
    <property type="match status" value="1"/>
</dbReference>
<dbReference type="Pfam" id="PF00347">
    <property type="entry name" value="Ribosomal_L6"/>
    <property type="match status" value="2"/>
</dbReference>
<dbReference type="PIRSF" id="PIRSF002162">
    <property type="entry name" value="Ribosomal_L6"/>
    <property type="match status" value="1"/>
</dbReference>
<dbReference type="PRINTS" id="PR00059">
    <property type="entry name" value="RIBOSOMALL6"/>
</dbReference>
<dbReference type="SUPFAM" id="SSF56053">
    <property type="entry name" value="Ribosomal protein L6"/>
    <property type="match status" value="2"/>
</dbReference>
<dbReference type="PROSITE" id="PS00525">
    <property type="entry name" value="RIBOSOMAL_L6_1"/>
    <property type="match status" value="1"/>
</dbReference>
<name>RL6_BACVZ</name>
<accession>A7Z0Q3</accession>
<reference key="1">
    <citation type="journal article" date="2007" name="Nat. Biotechnol.">
        <title>Comparative analysis of the complete genome sequence of the plant growth-promoting bacterium Bacillus amyloliquefaciens FZB42.</title>
        <authorList>
            <person name="Chen X.H."/>
            <person name="Koumoutsi A."/>
            <person name="Scholz R."/>
            <person name="Eisenreich A."/>
            <person name="Schneider K."/>
            <person name="Heinemeyer I."/>
            <person name="Morgenstern B."/>
            <person name="Voss B."/>
            <person name="Hess W.R."/>
            <person name="Reva O."/>
            <person name="Junge H."/>
            <person name="Voigt B."/>
            <person name="Jungblut P.R."/>
            <person name="Vater J."/>
            <person name="Suessmuth R."/>
            <person name="Liesegang H."/>
            <person name="Strittmatter A."/>
            <person name="Gottschalk G."/>
            <person name="Borriss R."/>
        </authorList>
    </citation>
    <scope>NUCLEOTIDE SEQUENCE [LARGE SCALE GENOMIC DNA]</scope>
    <source>
        <strain>DSM 23117 / BGSC 10A6 / LMG 26770 / FZB42</strain>
    </source>
</reference>
<proteinExistence type="inferred from homology"/>